<gene>
    <name evidence="1" type="primary">hemC</name>
    <name type="ordered locus">Gmet_3234</name>
</gene>
<comment type="function">
    <text evidence="1">Tetrapolymerization of the monopyrrole PBG into the hydroxymethylbilane pre-uroporphyrinogen in several discrete steps.</text>
</comment>
<comment type="catalytic activity">
    <reaction evidence="1">
        <text>4 porphobilinogen + H2O = hydroxymethylbilane + 4 NH4(+)</text>
        <dbReference type="Rhea" id="RHEA:13185"/>
        <dbReference type="ChEBI" id="CHEBI:15377"/>
        <dbReference type="ChEBI" id="CHEBI:28938"/>
        <dbReference type="ChEBI" id="CHEBI:57845"/>
        <dbReference type="ChEBI" id="CHEBI:58126"/>
        <dbReference type="EC" id="2.5.1.61"/>
    </reaction>
</comment>
<comment type="cofactor">
    <cofactor evidence="1">
        <name>dipyrromethane</name>
        <dbReference type="ChEBI" id="CHEBI:60342"/>
    </cofactor>
    <text evidence="1">Binds 1 dipyrromethane group covalently.</text>
</comment>
<comment type="pathway">
    <text evidence="1">Porphyrin-containing compound metabolism; protoporphyrin-IX biosynthesis; coproporphyrinogen-III from 5-aminolevulinate: step 2/4.</text>
</comment>
<comment type="subunit">
    <text evidence="1">Monomer.</text>
</comment>
<comment type="miscellaneous">
    <text evidence="1">The porphobilinogen subunits are added to the dipyrromethane group.</text>
</comment>
<comment type="similarity">
    <text evidence="1">Belongs to the HMBS family.</text>
</comment>
<dbReference type="EC" id="2.5.1.61" evidence="1"/>
<dbReference type="EMBL" id="CP000148">
    <property type="protein sequence ID" value="ABB33447.1"/>
    <property type="molecule type" value="Genomic_DNA"/>
</dbReference>
<dbReference type="RefSeq" id="WP_004512673.1">
    <property type="nucleotide sequence ID" value="NC_007517.1"/>
</dbReference>
<dbReference type="SMR" id="Q39QM7"/>
<dbReference type="STRING" id="269799.Gmet_3234"/>
<dbReference type="KEGG" id="gme:Gmet_3234"/>
<dbReference type="eggNOG" id="COG0181">
    <property type="taxonomic scope" value="Bacteria"/>
</dbReference>
<dbReference type="HOGENOM" id="CLU_019704_0_2_7"/>
<dbReference type="UniPathway" id="UPA00251">
    <property type="reaction ID" value="UER00319"/>
</dbReference>
<dbReference type="Proteomes" id="UP000007073">
    <property type="component" value="Chromosome"/>
</dbReference>
<dbReference type="GO" id="GO:0005737">
    <property type="term" value="C:cytoplasm"/>
    <property type="evidence" value="ECO:0007669"/>
    <property type="project" value="TreeGrafter"/>
</dbReference>
<dbReference type="GO" id="GO:0004418">
    <property type="term" value="F:hydroxymethylbilane synthase activity"/>
    <property type="evidence" value="ECO:0007669"/>
    <property type="project" value="UniProtKB-UniRule"/>
</dbReference>
<dbReference type="GO" id="GO:0006782">
    <property type="term" value="P:protoporphyrinogen IX biosynthetic process"/>
    <property type="evidence" value="ECO:0007669"/>
    <property type="project" value="UniProtKB-UniRule"/>
</dbReference>
<dbReference type="CDD" id="cd13646">
    <property type="entry name" value="PBP2_EcHMBS_like"/>
    <property type="match status" value="1"/>
</dbReference>
<dbReference type="FunFam" id="3.30.160.40:FF:000002">
    <property type="entry name" value="Porphobilinogen deaminase"/>
    <property type="match status" value="1"/>
</dbReference>
<dbReference type="FunFam" id="3.40.190.10:FF:000004">
    <property type="entry name" value="Porphobilinogen deaminase"/>
    <property type="match status" value="1"/>
</dbReference>
<dbReference type="FunFam" id="3.40.190.10:FF:000005">
    <property type="entry name" value="Porphobilinogen deaminase"/>
    <property type="match status" value="1"/>
</dbReference>
<dbReference type="Gene3D" id="3.40.190.10">
    <property type="entry name" value="Periplasmic binding protein-like II"/>
    <property type="match status" value="2"/>
</dbReference>
<dbReference type="Gene3D" id="3.30.160.40">
    <property type="entry name" value="Porphobilinogen deaminase, C-terminal domain"/>
    <property type="match status" value="1"/>
</dbReference>
<dbReference type="HAMAP" id="MF_00260">
    <property type="entry name" value="Porphobil_deam"/>
    <property type="match status" value="1"/>
</dbReference>
<dbReference type="InterPro" id="IPR000860">
    <property type="entry name" value="HemC"/>
</dbReference>
<dbReference type="InterPro" id="IPR022419">
    <property type="entry name" value="Porphobilin_deaminase_cofac_BS"/>
</dbReference>
<dbReference type="InterPro" id="IPR022417">
    <property type="entry name" value="Porphobilin_deaminase_N"/>
</dbReference>
<dbReference type="InterPro" id="IPR022418">
    <property type="entry name" value="Porphobilinogen_deaminase_C"/>
</dbReference>
<dbReference type="InterPro" id="IPR036803">
    <property type="entry name" value="Porphobilinogen_deaminase_C_sf"/>
</dbReference>
<dbReference type="NCBIfam" id="TIGR00212">
    <property type="entry name" value="hemC"/>
    <property type="match status" value="1"/>
</dbReference>
<dbReference type="PANTHER" id="PTHR11557">
    <property type="entry name" value="PORPHOBILINOGEN DEAMINASE"/>
    <property type="match status" value="1"/>
</dbReference>
<dbReference type="PANTHER" id="PTHR11557:SF0">
    <property type="entry name" value="PORPHOBILINOGEN DEAMINASE"/>
    <property type="match status" value="1"/>
</dbReference>
<dbReference type="Pfam" id="PF01379">
    <property type="entry name" value="Porphobil_deam"/>
    <property type="match status" value="1"/>
</dbReference>
<dbReference type="Pfam" id="PF03900">
    <property type="entry name" value="Porphobil_deamC"/>
    <property type="match status" value="1"/>
</dbReference>
<dbReference type="PIRSF" id="PIRSF001438">
    <property type="entry name" value="4pyrrol_synth_OHMeBilane_synth"/>
    <property type="match status" value="1"/>
</dbReference>
<dbReference type="PRINTS" id="PR00151">
    <property type="entry name" value="PORPHBDMNASE"/>
</dbReference>
<dbReference type="SUPFAM" id="SSF53850">
    <property type="entry name" value="Periplasmic binding protein-like II"/>
    <property type="match status" value="1"/>
</dbReference>
<dbReference type="SUPFAM" id="SSF54782">
    <property type="entry name" value="Porphobilinogen deaminase (hydroxymethylbilane synthase), C-terminal domain"/>
    <property type="match status" value="1"/>
</dbReference>
<dbReference type="PROSITE" id="PS00533">
    <property type="entry name" value="PORPHOBILINOGEN_DEAM"/>
    <property type="match status" value="1"/>
</dbReference>
<protein>
    <recommendedName>
        <fullName evidence="1">Porphobilinogen deaminase</fullName>
        <shortName evidence="1">PBG</shortName>
        <ecNumber evidence="1">2.5.1.61</ecNumber>
    </recommendedName>
    <alternativeName>
        <fullName evidence="1">Hydroxymethylbilane synthase</fullName>
        <shortName evidence="1">HMBS</shortName>
    </alternativeName>
    <alternativeName>
        <fullName evidence="1">Pre-uroporphyrinogen synthase</fullName>
    </alternativeName>
</protein>
<sequence>MAPKQLRIGTRASQLALWQANWVKGELEKRYPGMAVELVKIKTMGDKILDVPLAQVGGKGLFVKEIEEAMLRGEIDIAVHSMKDVPTEFPEGLGLYCITEREDPRDAVISRGVKFADLPQGARIGTSALRRQAQILKVRPDLQMVVIRGNVETRIRKLTDENLDAVILAAAGLNRLGFADQVSEYLPVELSLPAIGQGALGIECRLDDETIKDTIAFFNHPDTAHAVRAERALLWRCEGGCQVPIAAHGQVSGDTLTLTGFVASVDGTRSVKDTISGPVTECEKLGIALAEKLLADGAHEILAEVYQREVAREKEIPV</sequence>
<feature type="chain" id="PRO_0000304243" description="Porphobilinogen deaminase">
    <location>
        <begin position="1"/>
        <end position="318"/>
    </location>
</feature>
<feature type="modified residue" description="S-(dipyrrolylmethanemethyl)cysteine" evidence="1">
    <location>
        <position position="241"/>
    </location>
</feature>
<reference key="1">
    <citation type="journal article" date="2009" name="BMC Microbiol.">
        <title>The genome sequence of Geobacter metallireducens: features of metabolism, physiology and regulation common and dissimilar to Geobacter sulfurreducens.</title>
        <authorList>
            <person name="Aklujkar M."/>
            <person name="Krushkal J."/>
            <person name="DiBartolo G."/>
            <person name="Lapidus A."/>
            <person name="Land M.L."/>
            <person name="Lovley D.R."/>
        </authorList>
    </citation>
    <scope>NUCLEOTIDE SEQUENCE [LARGE SCALE GENOMIC DNA]</scope>
    <source>
        <strain>ATCC 53774 / DSM 7210 / GS-15</strain>
    </source>
</reference>
<organism>
    <name type="scientific">Geobacter metallireducens (strain ATCC 53774 / DSM 7210 / GS-15)</name>
    <dbReference type="NCBI Taxonomy" id="269799"/>
    <lineage>
        <taxon>Bacteria</taxon>
        <taxon>Pseudomonadati</taxon>
        <taxon>Thermodesulfobacteriota</taxon>
        <taxon>Desulfuromonadia</taxon>
        <taxon>Geobacterales</taxon>
        <taxon>Geobacteraceae</taxon>
        <taxon>Geobacter</taxon>
    </lineage>
</organism>
<evidence type="ECO:0000255" key="1">
    <source>
        <dbReference type="HAMAP-Rule" id="MF_00260"/>
    </source>
</evidence>
<keyword id="KW-0627">Porphyrin biosynthesis</keyword>
<keyword id="KW-1185">Reference proteome</keyword>
<keyword id="KW-0808">Transferase</keyword>
<accession>Q39QM7</accession>
<name>HEM3_GEOMG</name>
<proteinExistence type="inferred from homology"/>